<evidence type="ECO:0000255" key="1">
    <source>
        <dbReference type="HAMAP-Rule" id="MF_00380"/>
    </source>
</evidence>
<evidence type="ECO:0000256" key="2">
    <source>
        <dbReference type="SAM" id="MobiDB-lite"/>
    </source>
</evidence>
<dbReference type="EMBL" id="FM178379">
    <property type="protein sequence ID" value="CAQ79416.1"/>
    <property type="molecule type" value="Genomic_DNA"/>
</dbReference>
<dbReference type="RefSeq" id="WP_012550336.1">
    <property type="nucleotide sequence ID" value="NC_011312.1"/>
</dbReference>
<dbReference type="SMR" id="B6EN06"/>
<dbReference type="GeneID" id="28540987"/>
<dbReference type="KEGG" id="vsa:VSAL_I1731"/>
<dbReference type="eggNOG" id="COG0776">
    <property type="taxonomic scope" value="Bacteria"/>
</dbReference>
<dbReference type="HOGENOM" id="CLU_105066_1_3_6"/>
<dbReference type="Proteomes" id="UP000001730">
    <property type="component" value="Chromosome 1"/>
</dbReference>
<dbReference type="GO" id="GO:0005829">
    <property type="term" value="C:cytosol"/>
    <property type="evidence" value="ECO:0007669"/>
    <property type="project" value="TreeGrafter"/>
</dbReference>
<dbReference type="GO" id="GO:0003677">
    <property type="term" value="F:DNA binding"/>
    <property type="evidence" value="ECO:0007669"/>
    <property type="project" value="UniProtKB-UniRule"/>
</dbReference>
<dbReference type="GO" id="GO:0030527">
    <property type="term" value="F:structural constituent of chromatin"/>
    <property type="evidence" value="ECO:0007669"/>
    <property type="project" value="InterPro"/>
</dbReference>
<dbReference type="GO" id="GO:0006310">
    <property type="term" value="P:DNA recombination"/>
    <property type="evidence" value="ECO:0007669"/>
    <property type="project" value="UniProtKB-UniRule"/>
</dbReference>
<dbReference type="GO" id="GO:0009893">
    <property type="term" value="P:positive regulation of metabolic process"/>
    <property type="evidence" value="ECO:0007669"/>
    <property type="project" value="UniProtKB-ARBA"/>
</dbReference>
<dbReference type="GO" id="GO:0006355">
    <property type="term" value="P:regulation of DNA-templated transcription"/>
    <property type="evidence" value="ECO:0007669"/>
    <property type="project" value="UniProtKB-UniRule"/>
</dbReference>
<dbReference type="GO" id="GO:0006417">
    <property type="term" value="P:regulation of translation"/>
    <property type="evidence" value="ECO:0007669"/>
    <property type="project" value="UniProtKB-UniRule"/>
</dbReference>
<dbReference type="CDD" id="cd13835">
    <property type="entry name" value="IHF_A"/>
    <property type="match status" value="1"/>
</dbReference>
<dbReference type="FunFam" id="4.10.520.10:FF:000002">
    <property type="entry name" value="Integration host factor subunit alpha"/>
    <property type="match status" value="1"/>
</dbReference>
<dbReference type="Gene3D" id="4.10.520.10">
    <property type="entry name" value="IHF-like DNA-binding proteins"/>
    <property type="match status" value="1"/>
</dbReference>
<dbReference type="HAMAP" id="MF_00380">
    <property type="entry name" value="IHF_alpha"/>
    <property type="match status" value="1"/>
</dbReference>
<dbReference type="InterPro" id="IPR000119">
    <property type="entry name" value="Hist_DNA-bd"/>
</dbReference>
<dbReference type="InterPro" id="IPR020816">
    <property type="entry name" value="Histone-like_DNA-bd_CS"/>
</dbReference>
<dbReference type="InterPro" id="IPR010992">
    <property type="entry name" value="IHF-like_DNA-bd_dom_sf"/>
</dbReference>
<dbReference type="InterPro" id="IPR005684">
    <property type="entry name" value="IHF_alpha"/>
</dbReference>
<dbReference type="NCBIfam" id="TIGR00987">
    <property type="entry name" value="himA"/>
    <property type="match status" value="1"/>
</dbReference>
<dbReference type="NCBIfam" id="NF001401">
    <property type="entry name" value="PRK00285.1"/>
    <property type="match status" value="1"/>
</dbReference>
<dbReference type="PANTHER" id="PTHR33175">
    <property type="entry name" value="DNA-BINDING PROTEIN HU"/>
    <property type="match status" value="1"/>
</dbReference>
<dbReference type="PANTHER" id="PTHR33175:SF2">
    <property type="entry name" value="INTEGRATION HOST FACTOR SUBUNIT ALPHA"/>
    <property type="match status" value="1"/>
</dbReference>
<dbReference type="Pfam" id="PF00216">
    <property type="entry name" value="Bac_DNA_binding"/>
    <property type="match status" value="1"/>
</dbReference>
<dbReference type="PRINTS" id="PR01727">
    <property type="entry name" value="DNABINDINGHU"/>
</dbReference>
<dbReference type="SMART" id="SM00411">
    <property type="entry name" value="BHL"/>
    <property type="match status" value="1"/>
</dbReference>
<dbReference type="SUPFAM" id="SSF47729">
    <property type="entry name" value="IHF-like DNA-binding proteins"/>
    <property type="match status" value="1"/>
</dbReference>
<dbReference type="PROSITE" id="PS00045">
    <property type="entry name" value="HISTONE_LIKE"/>
    <property type="match status" value="1"/>
</dbReference>
<comment type="function">
    <text evidence="1">This protein is one of the two subunits of integration host factor, a specific DNA-binding protein that functions in genetic recombination as well as in transcriptional and translational control.</text>
</comment>
<comment type="subunit">
    <text evidence="1">Heterodimer of an alpha and a beta chain.</text>
</comment>
<comment type="similarity">
    <text evidence="1">Belongs to the bacterial histone-like protein family.</text>
</comment>
<proteinExistence type="inferred from homology"/>
<name>IHFA_ALISL</name>
<organism>
    <name type="scientific">Aliivibrio salmonicida (strain LFI1238)</name>
    <name type="common">Vibrio salmonicida (strain LFI1238)</name>
    <dbReference type="NCBI Taxonomy" id="316275"/>
    <lineage>
        <taxon>Bacteria</taxon>
        <taxon>Pseudomonadati</taxon>
        <taxon>Pseudomonadota</taxon>
        <taxon>Gammaproteobacteria</taxon>
        <taxon>Vibrionales</taxon>
        <taxon>Vibrionaceae</taxon>
        <taxon>Aliivibrio</taxon>
    </lineage>
</organism>
<gene>
    <name evidence="1" type="primary">ihfA</name>
    <name evidence="1" type="synonym">himA</name>
    <name type="ordered locus">VSAL_I1731</name>
</gene>
<feature type="chain" id="PRO_1000122127" description="Integration host factor subunit alpha">
    <location>
        <begin position="1"/>
        <end position="98"/>
    </location>
</feature>
<feature type="region of interest" description="Disordered" evidence="2">
    <location>
        <begin position="53"/>
        <end position="73"/>
    </location>
</feature>
<feature type="compositionally biased region" description="Basic and acidic residues" evidence="2">
    <location>
        <begin position="53"/>
        <end position="69"/>
    </location>
</feature>
<sequence length="98" mass="11005">MALTKADLAETLFEKVGLSKRDAKETVEVFFEEIKQALESGEQVKLSGFGNFDLREKSERPGRNPKTGEDIPISARRVVTFKPGQKLKARVEDLPVEK</sequence>
<reference key="1">
    <citation type="journal article" date="2008" name="BMC Genomics">
        <title>The genome sequence of the fish pathogen Aliivibrio salmonicida strain LFI1238 shows extensive evidence of gene decay.</title>
        <authorList>
            <person name="Hjerde E."/>
            <person name="Lorentzen M.S."/>
            <person name="Holden M.T."/>
            <person name="Seeger K."/>
            <person name="Paulsen S."/>
            <person name="Bason N."/>
            <person name="Churcher C."/>
            <person name="Harris D."/>
            <person name="Norbertczak H."/>
            <person name="Quail M.A."/>
            <person name="Sanders S."/>
            <person name="Thurston S."/>
            <person name="Parkhill J."/>
            <person name="Willassen N.P."/>
            <person name="Thomson N.R."/>
        </authorList>
    </citation>
    <scope>NUCLEOTIDE SEQUENCE [LARGE SCALE GENOMIC DNA]</scope>
    <source>
        <strain>LFI1238</strain>
    </source>
</reference>
<keyword id="KW-0233">DNA recombination</keyword>
<keyword id="KW-0238">DNA-binding</keyword>
<keyword id="KW-0804">Transcription</keyword>
<keyword id="KW-0805">Transcription regulation</keyword>
<keyword id="KW-0810">Translation regulation</keyword>
<accession>B6EN06</accession>
<protein>
    <recommendedName>
        <fullName evidence="1">Integration host factor subunit alpha</fullName>
        <shortName evidence="1">IHF-alpha</shortName>
    </recommendedName>
</protein>